<feature type="chain" id="PRO_0000342239" description="LL-diaminopimelate aminotransferase">
    <location>
        <begin position="1"/>
        <end position="410"/>
    </location>
</feature>
<feature type="binding site" evidence="1">
    <location>
        <position position="15"/>
    </location>
    <ligand>
        <name>substrate</name>
    </ligand>
</feature>
<feature type="binding site" evidence="1">
    <location>
        <position position="42"/>
    </location>
    <ligand>
        <name>substrate</name>
    </ligand>
</feature>
<feature type="binding site" evidence="1">
    <location>
        <position position="72"/>
    </location>
    <ligand>
        <name>pyridoxal 5'-phosphate</name>
        <dbReference type="ChEBI" id="CHEBI:597326"/>
    </ligand>
</feature>
<feature type="binding site" evidence="1">
    <location>
        <begin position="108"/>
        <end position="109"/>
    </location>
    <ligand>
        <name>pyridoxal 5'-phosphate</name>
        <dbReference type="ChEBI" id="CHEBI:597326"/>
    </ligand>
</feature>
<feature type="binding site" evidence="1">
    <location>
        <position position="109"/>
    </location>
    <ligand>
        <name>substrate</name>
    </ligand>
</feature>
<feature type="binding site" evidence="1">
    <location>
        <position position="132"/>
    </location>
    <ligand>
        <name>pyridoxal 5'-phosphate</name>
        <dbReference type="ChEBI" id="CHEBI:597326"/>
    </ligand>
</feature>
<feature type="binding site" evidence="1">
    <location>
        <position position="132"/>
    </location>
    <ligand>
        <name>substrate</name>
    </ligand>
</feature>
<feature type="binding site" evidence="1">
    <location>
        <position position="187"/>
    </location>
    <ligand>
        <name>pyridoxal 5'-phosphate</name>
        <dbReference type="ChEBI" id="CHEBI:597326"/>
    </ligand>
</feature>
<feature type="binding site" evidence="1">
    <location>
        <position position="187"/>
    </location>
    <ligand>
        <name>substrate</name>
    </ligand>
</feature>
<feature type="binding site" evidence="1">
    <location>
        <position position="218"/>
    </location>
    <ligand>
        <name>pyridoxal 5'-phosphate</name>
        <dbReference type="ChEBI" id="CHEBI:597326"/>
    </ligand>
</feature>
<feature type="binding site" evidence="1">
    <location>
        <begin position="246"/>
        <end position="248"/>
    </location>
    <ligand>
        <name>pyridoxal 5'-phosphate</name>
        <dbReference type="ChEBI" id="CHEBI:597326"/>
    </ligand>
</feature>
<feature type="binding site" evidence="1">
    <location>
        <position position="257"/>
    </location>
    <ligand>
        <name>pyridoxal 5'-phosphate</name>
        <dbReference type="ChEBI" id="CHEBI:597326"/>
    </ligand>
</feature>
<feature type="binding site" evidence="1">
    <location>
        <position position="292"/>
    </location>
    <ligand>
        <name>pyridoxal 5'-phosphate</name>
        <dbReference type="ChEBI" id="CHEBI:597326"/>
    </ligand>
</feature>
<feature type="binding site" evidence="1">
    <location>
        <position position="292"/>
    </location>
    <ligand>
        <name>substrate</name>
    </ligand>
</feature>
<feature type="binding site" evidence="1">
    <location>
        <position position="388"/>
    </location>
    <ligand>
        <name>substrate</name>
    </ligand>
</feature>
<feature type="modified residue" description="N6-(pyridoxal phosphate)lysine" evidence="1">
    <location>
        <position position="249"/>
    </location>
</feature>
<protein>
    <recommendedName>
        <fullName evidence="1">LL-diaminopimelate aminotransferase</fullName>
        <shortName evidence="1">DAP-AT</shortName>
        <shortName evidence="1">DAP-aminotransferase</shortName>
        <shortName evidence="1">LL-DAP-aminotransferase</shortName>
        <ecNumber evidence="1">2.6.1.83</ecNumber>
    </recommendedName>
</protein>
<organism>
    <name type="scientific">Geobacter sulfurreducens (strain ATCC 51573 / DSM 12127 / PCA)</name>
    <dbReference type="NCBI Taxonomy" id="243231"/>
    <lineage>
        <taxon>Bacteria</taxon>
        <taxon>Pseudomonadati</taxon>
        <taxon>Thermodesulfobacteriota</taxon>
        <taxon>Desulfuromonadia</taxon>
        <taxon>Geobacterales</taxon>
        <taxon>Geobacteraceae</taxon>
        <taxon>Geobacter</taxon>
    </lineage>
</organism>
<name>DAPAT_GEOSL</name>
<sequence length="410" mass="45200">MAKINDHYLKLKAGYLFPEIGRRVREFAAANPSAKVIRLGIGDVTRPLAPAVIKAFHEAVDDLATTENFAGYGPEQGYDWLINAIIEKSYKPLGVDLKTEEMFISDGSKCDCANILDIFALDNVVAIGDPVYPVYNDTNVMIGRTGEADDKGYYKGIVYMPCTEENGFIPSLPTEKVDIIYLCFPNNPTGTVATKAELKKWVDYAIANDAVIFFDAAYEAFITDPAIPHSIYEIEGAKKCAIEFRSFSKTAGFTGVRCGLVVVPEEVMGTTPTGEKYSFNKLWLRRTTTKFNGASYPVQKAAAAVYSDEGWQQNKEIIDYYMENARIIREGLAAAGLTVYGGVNAPYIWLKTPGGMSSWDFFDKLLNECNVVGTPGSGFGPSGEGFFRLSAFGHRENVIEAVERIKKNLK</sequence>
<keyword id="KW-0032">Aminotransferase</keyword>
<keyword id="KW-0663">Pyridoxal phosphate</keyword>
<keyword id="KW-1185">Reference proteome</keyword>
<keyword id="KW-0808">Transferase</keyword>
<gene>
    <name evidence="1" type="primary">dapL</name>
    <name type="ordered locus">GSU0162</name>
</gene>
<accession>Q74GT3</accession>
<dbReference type="EC" id="2.6.1.83" evidence="1"/>
<dbReference type="EMBL" id="AE017180">
    <property type="protein sequence ID" value="AAR33497.1"/>
    <property type="molecule type" value="Genomic_DNA"/>
</dbReference>
<dbReference type="RefSeq" id="NP_951224.1">
    <property type="nucleotide sequence ID" value="NC_002939.5"/>
</dbReference>
<dbReference type="RefSeq" id="WP_010940837.1">
    <property type="nucleotide sequence ID" value="NC_002939.5"/>
</dbReference>
<dbReference type="SMR" id="Q74GT3"/>
<dbReference type="STRING" id="243231.GSU0162"/>
<dbReference type="EnsemblBacteria" id="AAR33497">
    <property type="protein sequence ID" value="AAR33497"/>
    <property type="gene ID" value="GSU0162"/>
</dbReference>
<dbReference type="KEGG" id="gsu:GSU0162"/>
<dbReference type="PATRIC" id="fig|243231.5.peg.162"/>
<dbReference type="eggNOG" id="COG0436">
    <property type="taxonomic scope" value="Bacteria"/>
</dbReference>
<dbReference type="HOGENOM" id="CLU_051433_0_0_7"/>
<dbReference type="InParanoid" id="Q74GT3"/>
<dbReference type="OrthoDB" id="9804474at2"/>
<dbReference type="BRENDA" id="2.6.1.83">
    <property type="organism ID" value="7676"/>
</dbReference>
<dbReference type="UniPathway" id="UPA00034">
    <property type="reaction ID" value="UER00466"/>
</dbReference>
<dbReference type="Proteomes" id="UP000000577">
    <property type="component" value="Chromosome"/>
</dbReference>
<dbReference type="GO" id="GO:0010285">
    <property type="term" value="F:L,L-diaminopimelate aminotransferase activity"/>
    <property type="evidence" value="ECO:0007669"/>
    <property type="project" value="UniProtKB-EC"/>
</dbReference>
<dbReference type="GO" id="GO:0030170">
    <property type="term" value="F:pyridoxal phosphate binding"/>
    <property type="evidence" value="ECO:0007669"/>
    <property type="project" value="InterPro"/>
</dbReference>
<dbReference type="GO" id="GO:0009089">
    <property type="term" value="P:lysine biosynthetic process via diaminopimelate"/>
    <property type="evidence" value="ECO:0007669"/>
    <property type="project" value="UniProtKB-UniPathway"/>
</dbReference>
<dbReference type="CDD" id="cd00609">
    <property type="entry name" value="AAT_like"/>
    <property type="match status" value="1"/>
</dbReference>
<dbReference type="FunFam" id="3.40.640.10:FF:000099">
    <property type="entry name" value="LL-diaminopimelate aminotransferase, chloroplastic"/>
    <property type="match status" value="1"/>
</dbReference>
<dbReference type="Gene3D" id="3.90.1150.10">
    <property type="entry name" value="Aspartate Aminotransferase, domain 1"/>
    <property type="match status" value="1"/>
</dbReference>
<dbReference type="Gene3D" id="3.40.640.10">
    <property type="entry name" value="Type I PLP-dependent aspartate aminotransferase-like (Major domain)"/>
    <property type="match status" value="1"/>
</dbReference>
<dbReference type="HAMAP" id="MF_01642">
    <property type="entry name" value="DapL_aminotrans_1"/>
    <property type="match status" value="1"/>
</dbReference>
<dbReference type="InterPro" id="IPR004839">
    <property type="entry name" value="Aminotransferase_I/II_large"/>
</dbReference>
<dbReference type="InterPro" id="IPR019942">
    <property type="entry name" value="DapL/ALD1"/>
</dbReference>
<dbReference type="InterPro" id="IPR015424">
    <property type="entry name" value="PyrdxlP-dep_Trfase"/>
</dbReference>
<dbReference type="InterPro" id="IPR015421">
    <property type="entry name" value="PyrdxlP-dep_Trfase_major"/>
</dbReference>
<dbReference type="InterPro" id="IPR015422">
    <property type="entry name" value="PyrdxlP-dep_Trfase_small"/>
</dbReference>
<dbReference type="NCBIfam" id="TIGR03542">
    <property type="entry name" value="DAPAT_plant"/>
    <property type="match status" value="1"/>
</dbReference>
<dbReference type="PANTHER" id="PTHR43144">
    <property type="entry name" value="AMINOTRANSFERASE"/>
    <property type="match status" value="1"/>
</dbReference>
<dbReference type="Pfam" id="PF00155">
    <property type="entry name" value="Aminotran_1_2"/>
    <property type="match status" value="1"/>
</dbReference>
<dbReference type="SUPFAM" id="SSF53383">
    <property type="entry name" value="PLP-dependent transferases"/>
    <property type="match status" value="1"/>
</dbReference>
<proteinExistence type="inferred from homology"/>
<reference key="1">
    <citation type="journal article" date="2003" name="Science">
        <title>Genome of Geobacter sulfurreducens: metal reduction in subsurface environments.</title>
        <authorList>
            <person name="Methe B.A."/>
            <person name="Nelson K.E."/>
            <person name="Eisen J.A."/>
            <person name="Paulsen I.T."/>
            <person name="Nelson W.C."/>
            <person name="Heidelberg J.F."/>
            <person name="Wu D."/>
            <person name="Wu M."/>
            <person name="Ward N.L."/>
            <person name="Beanan M.J."/>
            <person name="Dodson R.J."/>
            <person name="Madupu R."/>
            <person name="Brinkac L.M."/>
            <person name="Daugherty S.C."/>
            <person name="DeBoy R.T."/>
            <person name="Durkin A.S."/>
            <person name="Gwinn M.L."/>
            <person name="Kolonay J.F."/>
            <person name="Sullivan S.A."/>
            <person name="Haft D.H."/>
            <person name="Selengut J."/>
            <person name="Davidsen T.M."/>
            <person name="Zafar N."/>
            <person name="White O."/>
            <person name="Tran B."/>
            <person name="Romero C."/>
            <person name="Forberger H.A."/>
            <person name="Weidman J.F."/>
            <person name="Khouri H.M."/>
            <person name="Feldblyum T.V."/>
            <person name="Utterback T.R."/>
            <person name="Van Aken S.E."/>
            <person name="Lovley D.R."/>
            <person name="Fraser C.M."/>
        </authorList>
    </citation>
    <scope>NUCLEOTIDE SEQUENCE [LARGE SCALE GENOMIC DNA]</scope>
    <source>
        <strain>ATCC 51573 / DSM 12127 / PCA</strain>
    </source>
</reference>
<comment type="function">
    <text evidence="1">Involved in the synthesis of meso-diaminopimelate (m-DAP or DL-DAP), required for both lysine and peptidoglycan biosynthesis. Catalyzes the direct conversion of tetrahydrodipicolinate to LL-diaminopimelate.</text>
</comment>
<comment type="catalytic activity">
    <reaction evidence="1">
        <text>(2S,6S)-2,6-diaminopimelate + 2-oxoglutarate = (S)-2,3,4,5-tetrahydrodipicolinate + L-glutamate + H2O + H(+)</text>
        <dbReference type="Rhea" id="RHEA:23988"/>
        <dbReference type="ChEBI" id="CHEBI:15377"/>
        <dbReference type="ChEBI" id="CHEBI:15378"/>
        <dbReference type="ChEBI" id="CHEBI:16810"/>
        <dbReference type="ChEBI" id="CHEBI:16845"/>
        <dbReference type="ChEBI" id="CHEBI:29985"/>
        <dbReference type="ChEBI" id="CHEBI:57609"/>
        <dbReference type="EC" id="2.6.1.83"/>
    </reaction>
</comment>
<comment type="cofactor">
    <cofactor evidence="1">
        <name>pyridoxal 5'-phosphate</name>
        <dbReference type="ChEBI" id="CHEBI:597326"/>
    </cofactor>
</comment>
<comment type="pathway">
    <text evidence="1">Amino-acid biosynthesis; L-lysine biosynthesis via DAP pathway; LL-2,6-diaminopimelate from (S)-tetrahydrodipicolinate (aminotransferase route): step 1/1.</text>
</comment>
<comment type="subunit">
    <text evidence="1">Homodimer.</text>
</comment>
<comment type="similarity">
    <text evidence="1">Belongs to the class-I pyridoxal-phosphate-dependent aminotransferase family. LL-diaminopimelate aminotransferase subfamily.</text>
</comment>
<evidence type="ECO:0000255" key="1">
    <source>
        <dbReference type="HAMAP-Rule" id="MF_01642"/>
    </source>
</evidence>